<dbReference type="EMBL" id="U35246">
    <property type="protein sequence ID" value="AAC50931.1"/>
    <property type="molecule type" value="mRNA"/>
</dbReference>
<dbReference type="EMBL" id="AJ133421">
    <property type="protein sequence ID" value="CAB40417.1"/>
    <property type="molecule type" value="mRNA"/>
</dbReference>
<dbReference type="EMBL" id="AF165513">
    <property type="protein sequence ID" value="AAF86643.1"/>
    <property type="molecule type" value="mRNA"/>
</dbReference>
<dbReference type="EMBL" id="AK023170">
    <property type="protein sequence ID" value="BAB14443.1"/>
    <property type="molecule type" value="mRNA"/>
</dbReference>
<dbReference type="EMBL" id="AK223214">
    <property type="protein sequence ID" value="BAD96934.1"/>
    <property type="molecule type" value="mRNA"/>
</dbReference>
<dbReference type="EMBL" id="AL358073">
    <property type="protein sequence ID" value="CAI14265.1"/>
    <property type="molecule type" value="Genomic_DNA"/>
</dbReference>
<dbReference type="EMBL" id="CH471121">
    <property type="protein sequence ID" value="EAW53584.1"/>
    <property type="molecule type" value="Genomic_DNA"/>
</dbReference>
<dbReference type="EMBL" id="CH471121">
    <property type="protein sequence ID" value="EAW53585.1"/>
    <property type="molecule type" value="Genomic_DNA"/>
</dbReference>
<dbReference type="EMBL" id="BC012932">
    <property type="protein sequence ID" value="AAH12932.1"/>
    <property type="molecule type" value="mRNA"/>
</dbReference>
<dbReference type="EMBL" id="BC028382">
    <property type="protein sequence ID" value="AAH28382.1"/>
    <property type="molecule type" value="mRNA"/>
</dbReference>
<dbReference type="CCDS" id="CCDS60244.1">
    <molecule id="Q9NRW7-2"/>
</dbReference>
<dbReference type="CCDS" id="CCDS944.1">
    <molecule id="Q9NRW7-1"/>
</dbReference>
<dbReference type="PIR" id="JC5722">
    <property type="entry name" value="JC5722"/>
</dbReference>
<dbReference type="RefSeq" id="NP_001266282.1">
    <molecule id="Q9NRW7-2"/>
    <property type="nucleotide sequence ID" value="NM_001279353.2"/>
</dbReference>
<dbReference type="RefSeq" id="NP_001266283.1">
    <property type="nucleotide sequence ID" value="NM_001279354.1"/>
</dbReference>
<dbReference type="RefSeq" id="NP_009190.2">
    <molecule id="Q9NRW7-1"/>
    <property type="nucleotide sequence ID" value="NM_007259.4"/>
</dbReference>
<dbReference type="SMR" id="Q9NRW7"/>
<dbReference type="BioGRID" id="116443">
    <property type="interactions" value="170"/>
</dbReference>
<dbReference type="DIP" id="DIP-46823N"/>
<dbReference type="FunCoup" id="Q9NRW7">
    <property type="interactions" value="2430"/>
</dbReference>
<dbReference type="IntAct" id="Q9NRW7">
    <property type="interactions" value="59"/>
</dbReference>
<dbReference type="MINT" id="Q9NRW7"/>
<dbReference type="STRING" id="9606.ENSP00000495563"/>
<dbReference type="iPTMnet" id="Q9NRW7"/>
<dbReference type="PhosphoSitePlus" id="Q9NRW7"/>
<dbReference type="SwissPalm" id="Q9NRW7"/>
<dbReference type="BioMuta" id="VPS45"/>
<dbReference type="DMDM" id="23396937"/>
<dbReference type="jPOST" id="Q9NRW7"/>
<dbReference type="MassIVE" id="Q9NRW7"/>
<dbReference type="PaxDb" id="9606-ENSP00000358126"/>
<dbReference type="PeptideAtlas" id="Q9NRW7"/>
<dbReference type="ProteomicsDB" id="27808"/>
<dbReference type="ProteomicsDB" id="82431">
    <molecule id="Q9NRW7-1"/>
</dbReference>
<dbReference type="Pumba" id="Q9NRW7"/>
<dbReference type="Antibodypedia" id="34017">
    <property type="antibodies" value="289 antibodies from 30 providers"/>
</dbReference>
<dbReference type="DNASU" id="11311"/>
<dbReference type="Ensembl" id="ENST00000369128.9">
    <molecule id="Q9NRW7-2"/>
    <property type="protein sequence ID" value="ENSP00000358124.5"/>
    <property type="gene ID" value="ENSG00000136631.16"/>
</dbReference>
<dbReference type="Ensembl" id="ENST00000644510.2">
    <molecule id="Q9NRW7-1"/>
    <property type="protein sequence ID" value="ENSP00000495563.1"/>
    <property type="gene ID" value="ENSG00000136631.16"/>
</dbReference>
<dbReference type="GeneID" id="11311"/>
<dbReference type="KEGG" id="hsa:11311"/>
<dbReference type="MANE-Select" id="ENST00000644510.2">
    <property type="protein sequence ID" value="ENSP00000495563.1"/>
    <property type="RefSeq nucleotide sequence ID" value="NM_007259.5"/>
    <property type="RefSeq protein sequence ID" value="NP_009190.2"/>
</dbReference>
<dbReference type="UCSC" id="uc001etp.5">
    <molecule id="Q9NRW7-1"/>
    <property type="organism name" value="human"/>
</dbReference>
<dbReference type="AGR" id="HGNC:14579"/>
<dbReference type="CTD" id="11311"/>
<dbReference type="DisGeNET" id="11311"/>
<dbReference type="GeneCards" id="VPS45"/>
<dbReference type="HGNC" id="HGNC:14579">
    <property type="gene designation" value="VPS45"/>
</dbReference>
<dbReference type="HPA" id="ENSG00000136631">
    <property type="expression patterns" value="Low tissue specificity"/>
</dbReference>
<dbReference type="MalaCards" id="VPS45"/>
<dbReference type="MIM" id="610035">
    <property type="type" value="gene"/>
</dbReference>
<dbReference type="MIM" id="615285">
    <property type="type" value="phenotype"/>
</dbReference>
<dbReference type="neXtProt" id="NX_Q9NRW7"/>
<dbReference type="OpenTargets" id="ENSG00000136631"/>
<dbReference type="Orphanet" id="369852">
    <property type="disease" value="Congenital neutropenia-myelofibrosis-nephromegaly syndrome"/>
</dbReference>
<dbReference type="PharmGKB" id="PA37901"/>
<dbReference type="VEuPathDB" id="HostDB:ENSG00000136631"/>
<dbReference type="eggNOG" id="KOG1299">
    <property type="taxonomic scope" value="Eukaryota"/>
</dbReference>
<dbReference type="GeneTree" id="ENSGT00550000075028"/>
<dbReference type="HOGENOM" id="CLU_013933_3_1_1"/>
<dbReference type="InParanoid" id="Q9NRW7"/>
<dbReference type="OMA" id="VHQLNNA"/>
<dbReference type="OrthoDB" id="10266265at2759"/>
<dbReference type="PAN-GO" id="Q9NRW7">
    <property type="GO annotations" value="3 GO annotations based on evolutionary models"/>
</dbReference>
<dbReference type="PhylomeDB" id="Q9NRW7"/>
<dbReference type="TreeFam" id="TF300407"/>
<dbReference type="PathwayCommons" id="Q9NRW7"/>
<dbReference type="Reactome" id="R-HSA-6811438">
    <property type="pathway name" value="Intra-Golgi traffic"/>
</dbReference>
<dbReference type="Reactome" id="R-HSA-9754560">
    <property type="pathway name" value="SARS-CoV-2 modulates autophagy"/>
</dbReference>
<dbReference type="Reactome" id="R-HSA-983231">
    <property type="pathway name" value="Factors involved in megakaryocyte development and platelet production"/>
</dbReference>
<dbReference type="SignaLink" id="Q9NRW7"/>
<dbReference type="BioGRID-ORCS" id="11311">
    <property type="hits" value="205 hits in 1170 CRISPR screens"/>
</dbReference>
<dbReference type="CD-CODE" id="FB4E32DD">
    <property type="entry name" value="Presynaptic clusters and postsynaptic densities"/>
</dbReference>
<dbReference type="ChiTaRS" id="VPS45">
    <property type="organism name" value="human"/>
</dbReference>
<dbReference type="GeneWiki" id="VPS45"/>
<dbReference type="GenomeRNAi" id="11311"/>
<dbReference type="Pharos" id="Q9NRW7">
    <property type="development level" value="Tbio"/>
</dbReference>
<dbReference type="PRO" id="PR:Q9NRW7"/>
<dbReference type="Proteomes" id="UP000005640">
    <property type="component" value="Chromosome 1"/>
</dbReference>
<dbReference type="RNAct" id="Q9NRW7">
    <property type="molecule type" value="protein"/>
</dbReference>
<dbReference type="Bgee" id="ENSG00000136631">
    <property type="expression patterns" value="Expressed in cerebellar cortex and 209 other cell types or tissues"/>
</dbReference>
<dbReference type="ExpressionAtlas" id="Q9NRW7">
    <property type="expression patterns" value="baseline and differential"/>
</dbReference>
<dbReference type="GO" id="GO:0010008">
    <property type="term" value="C:endosome membrane"/>
    <property type="evidence" value="ECO:0000304"/>
    <property type="project" value="Reactome"/>
</dbReference>
<dbReference type="GO" id="GO:0005794">
    <property type="term" value="C:Golgi apparatus"/>
    <property type="evidence" value="ECO:0000250"/>
    <property type="project" value="BHF-UCL"/>
</dbReference>
<dbReference type="GO" id="GO:0000139">
    <property type="term" value="C:Golgi membrane"/>
    <property type="evidence" value="ECO:0000318"/>
    <property type="project" value="GO_Central"/>
</dbReference>
<dbReference type="GO" id="GO:0016020">
    <property type="term" value="C:membrane"/>
    <property type="evidence" value="ECO:0000250"/>
    <property type="project" value="BHF-UCL"/>
</dbReference>
<dbReference type="GO" id="GO:0008021">
    <property type="term" value="C:synaptic vesicle"/>
    <property type="evidence" value="ECO:0007669"/>
    <property type="project" value="Ensembl"/>
</dbReference>
<dbReference type="GO" id="GO:0006886">
    <property type="term" value="P:intracellular protein transport"/>
    <property type="evidence" value="ECO:0000318"/>
    <property type="project" value="GO_Central"/>
</dbReference>
<dbReference type="GO" id="GO:0016192">
    <property type="term" value="P:vesicle-mediated transport"/>
    <property type="evidence" value="ECO:0000318"/>
    <property type="project" value="GO_Central"/>
</dbReference>
<dbReference type="FunFam" id="1.25.40.60:FF:000003">
    <property type="entry name" value="Vacuolar protein sorting-associated protein 45"/>
    <property type="match status" value="1"/>
</dbReference>
<dbReference type="FunFam" id="3.90.830.10:FF:000002">
    <property type="entry name" value="Vacuolar protein sorting-associated protein 45"/>
    <property type="match status" value="1"/>
</dbReference>
<dbReference type="FunFam" id="3.40.50.2060:FF:000003">
    <property type="entry name" value="vacuolar protein sorting-associated protein 45 isoform X1"/>
    <property type="match status" value="1"/>
</dbReference>
<dbReference type="Gene3D" id="1.25.40.60">
    <property type="match status" value="1"/>
</dbReference>
<dbReference type="Gene3D" id="3.40.50.1910">
    <property type="match status" value="1"/>
</dbReference>
<dbReference type="Gene3D" id="3.40.50.2060">
    <property type="match status" value="1"/>
</dbReference>
<dbReference type="Gene3D" id="3.90.830.10">
    <property type="entry name" value="Syntaxin Binding Protein 1, Chain A, domain 2"/>
    <property type="match status" value="1"/>
</dbReference>
<dbReference type="InterPro" id="IPR043154">
    <property type="entry name" value="Sec-1-like_dom1"/>
</dbReference>
<dbReference type="InterPro" id="IPR043127">
    <property type="entry name" value="Sec-1-like_dom3a"/>
</dbReference>
<dbReference type="InterPro" id="IPR001619">
    <property type="entry name" value="Sec1-like"/>
</dbReference>
<dbReference type="InterPro" id="IPR027482">
    <property type="entry name" value="Sec1-like_dom2"/>
</dbReference>
<dbReference type="InterPro" id="IPR036045">
    <property type="entry name" value="Sec1-like_sf"/>
</dbReference>
<dbReference type="PANTHER" id="PTHR11679">
    <property type="entry name" value="VESICLE PROTEIN SORTING-ASSOCIATED"/>
    <property type="match status" value="1"/>
</dbReference>
<dbReference type="Pfam" id="PF00995">
    <property type="entry name" value="Sec1"/>
    <property type="match status" value="1"/>
</dbReference>
<dbReference type="PIRSF" id="PIRSF005715">
    <property type="entry name" value="VPS45_Sec1"/>
    <property type="match status" value="1"/>
</dbReference>
<dbReference type="SUPFAM" id="SSF56815">
    <property type="entry name" value="Sec1/munc18-like (SM) proteins"/>
    <property type="match status" value="1"/>
</dbReference>
<protein>
    <recommendedName>
        <fullName>Vacuolar protein sorting-associated protein 45</fullName>
        <shortName>h-VPS45</shortName>
        <shortName>hlVps45</shortName>
    </recommendedName>
</protein>
<feature type="chain" id="PRO_0000206312" description="Vacuolar protein sorting-associated protein 45">
    <location>
        <begin position="1"/>
        <end position="570"/>
    </location>
</feature>
<feature type="modified residue" description="Phosphoserine" evidence="7 8">
    <location>
        <position position="307"/>
    </location>
</feature>
<feature type="modified residue" description="Phosphoserine" evidence="2">
    <location>
        <position position="441"/>
    </location>
</feature>
<feature type="splice variant" id="VSP_056739" description="In isoform 2." evidence="6">
    <location>
        <begin position="1"/>
        <end position="36"/>
    </location>
</feature>
<feature type="splice variant" id="VSP_056740" description="In isoform 2." evidence="6">
    <location>
        <begin position="124"/>
        <end position="192"/>
    </location>
</feature>
<feature type="splice variant" id="VSP_056741" description="In isoform 2." evidence="6">
    <original>SFLEEVLASGLHSRSKESSQVTSRSASRR</original>
    <variation>RDGVSLCSPAWFRTPGLKRSTRLSLPKCWDYSFPRGSSGFWTAQPKQGELSSHIKVSEQKMKRWLGEGHSFLSCPHYRFSLLNKGVGEQLWVLCWLLELISR</variation>
    <location>
        <begin position="542"/>
        <end position="570"/>
    </location>
</feature>
<feature type="sequence variant" id="VAR_069865" description="In SCN5; patient fibroblasts are characterized by impaired motility and increased apoptosis; dbSNP:rs879255237." evidence="5">
    <original>T</original>
    <variation>N</variation>
    <location>
        <position position="224"/>
    </location>
</feature>
<feature type="sequence variant" id="VAR_069866" description="In SCN5; dbSNP:rs782269909." evidence="5">
    <original>E</original>
    <variation>K</variation>
    <location>
        <position position="238"/>
    </location>
</feature>
<feature type="sequence conflict" description="In Ref. 1; AAC50931." evidence="6" ref="1">
    <original>YI</original>
    <variation>SL</variation>
    <location>
        <begin position="81"/>
        <end position="82"/>
    </location>
</feature>
<feature type="sequence conflict" description="In Ref. 1; AAC50931." evidence="6" ref="1">
    <original>T</original>
    <variation>S</variation>
    <location>
        <position position="92"/>
    </location>
</feature>
<feature type="sequence conflict" description="In Ref. 5; BAD96934." evidence="6" ref="5">
    <original>T</original>
    <variation>A</variation>
    <location>
        <position position="163"/>
    </location>
</feature>
<feature type="sequence conflict" description="In Ref. 1; AAC50931." evidence="6" ref="1">
    <original>A</original>
    <variation>G</variation>
    <location>
        <position position="188"/>
    </location>
</feature>
<feature type="sequence conflict" description="In Ref. 1; AAC50931." evidence="6" ref="1">
    <original>T</original>
    <variation>S</variation>
    <location>
        <position position="196"/>
    </location>
</feature>
<feature type="sequence conflict" description="In Ref. 2; CAB40417." evidence="6" ref="2">
    <original>C</original>
    <variation>L</variation>
    <location>
        <position position="219"/>
    </location>
</feature>
<feature type="sequence conflict" description="In Ref. 1; AAC50931." evidence="6" ref="1">
    <original>G</original>
    <variation>D</variation>
    <location>
        <position position="241"/>
    </location>
</feature>
<feature type="sequence conflict" description="In Ref. 1; AAC50931." evidence="6" ref="1">
    <original>K</original>
    <variation>R</variation>
    <location>
        <position position="298"/>
    </location>
</feature>
<feature type="sequence conflict" description="In Ref. 1; AAC50931." evidence="6" ref="1">
    <original>I</original>
    <variation>V</variation>
    <location>
        <position position="370"/>
    </location>
</feature>
<feature type="sequence conflict" description="In Ref. 1; AAC50931." evidence="6" ref="1">
    <original>A</original>
    <variation>V</variation>
    <location>
        <position position="385"/>
    </location>
</feature>
<feature type="sequence conflict" description="In Ref. 1; AAC50931." evidence="6" ref="1">
    <original>MM</original>
    <variation>IV</variation>
    <location>
        <begin position="407"/>
        <end position="408"/>
    </location>
</feature>
<feature type="sequence conflict" description="In Ref. 5; BAD96934." evidence="6" ref="5">
    <original>N</original>
    <variation>H</variation>
    <location>
        <position position="412"/>
    </location>
</feature>
<feature type="sequence conflict" description="In Ref. 1; AAC50931." evidence="6" ref="1">
    <original>N</original>
    <variation>S</variation>
    <location>
        <position position="412"/>
    </location>
</feature>
<feature type="sequence conflict" description="In Ref. 1; AAC50931." evidence="6" ref="1">
    <original>S</original>
    <variation>A</variation>
    <location>
        <position position="416"/>
    </location>
</feature>
<feature type="sequence conflict" description="In Ref. 1; AAC50931." evidence="6" ref="1">
    <original>R</original>
    <variation>K</variation>
    <location>
        <position position="481"/>
    </location>
</feature>
<feature type="sequence conflict" description="In Ref. 1; AAC50931." evidence="6" ref="1">
    <original>V</original>
    <variation>I</variation>
    <location>
        <position position="537"/>
    </location>
</feature>
<feature type="sequence conflict" description="In Ref. 1; AAC50931." evidence="6" ref="1">
    <original>K</original>
    <variation>R</variation>
    <location>
        <position position="557"/>
    </location>
</feature>
<feature type="sequence conflict" description="In Ref. 1; AAC50931." evidence="6" ref="1">
    <original>V</original>
    <variation>A</variation>
    <location>
        <position position="562"/>
    </location>
</feature>
<evidence type="ECO:0000250" key="1"/>
<evidence type="ECO:0000250" key="2">
    <source>
        <dbReference type="UniProtKB" id="O08700"/>
    </source>
</evidence>
<evidence type="ECO:0000269" key="3">
    <source>
    </source>
</evidence>
<evidence type="ECO:0000269" key="4">
    <source>
    </source>
</evidence>
<evidence type="ECO:0000269" key="5">
    <source>
    </source>
</evidence>
<evidence type="ECO:0000305" key="6"/>
<evidence type="ECO:0007744" key="7">
    <source>
    </source>
</evidence>
<evidence type="ECO:0007744" key="8">
    <source>
    </source>
</evidence>
<proteinExistence type="evidence at protein level"/>
<comment type="function">
    <text>May play a role in vesicle-mediated protein trafficking from the Golgi stack through the trans-Golgi network.</text>
</comment>
<comment type="subunit">
    <text evidence="1 3 4">Interacts with STX6 (By similarity). Interacts with ZFYVE20.</text>
</comment>
<comment type="interaction">
    <interactant intactId="EBI-1782543">
        <id>Q9NRW7</id>
    </interactant>
    <interactant intactId="EBI-1105310">
        <id>Q9H1K0</id>
        <label>RBSN</label>
    </interactant>
    <organismsDiffer>false</organismsDiffer>
    <experiments>7</experiments>
</comment>
<comment type="interaction">
    <interactant intactId="EBI-1782543">
        <id>Q9NRW7</id>
    </interactant>
    <interactant intactId="EBI-2853548">
        <id>O14662</id>
        <label>STX16</label>
    </interactant>
    <organismsDiffer>false</organismsDiffer>
    <experiments>3</experiments>
</comment>
<comment type="interaction">
    <interactant intactId="EBI-1782543">
        <id>Q9NRW7</id>
    </interactant>
    <interactant intactId="EBI-9089968">
        <id>O14662-5</id>
        <label>STX16</label>
    </interactant>
    <organismsDiffer>false</organismsDiffer>
    <experiments>3</experiments>
</comment>
<comment type="subcellular location">
    <subcellularLocation>
        <location evidence="1">Golgi apparatus membrane</location>
        <topology evidence="1">Peripheral membrane protein</topology>
    </subcellularLocation>
    <subcellularLocation>
        <location evidence="1">Endosome membrane</location>
        <topology evidence="1">Peripheral membrane protein</topology>
    </subcellularLocation>
    <text evidence="1">Associated with Golgi/endosomal vesicles and the trans-Golgi network.</text>
</comment>
<comment type="alternative products">
    <event type="alternative splicing"/>
    <isoform>
        <id>Q9NRW7-1</id>
        <name>1</name>
        <sequence type="displayed"/>
    </isoform>
    <isoform>
        <id>Q9NRW7-2</id>
        <name>2</name>
        <sequence type="described" ref="VSP_056739 VSP_056740 VSP_056741"/>
    </isoform>
</comment>
<comment type="tissue specificity">
    <text>Ubiquitous. Expression was highest in testis, heart and brain, intermediate in kidney, spleen, prostate, ovary, small intestine and thymus and low in lung, skeletal muscle, placenta, colon, pancreas, peripheral blood leukocytes and liver.</text>
</comment>
<comment type="disease" evidence="5">
    <disease id="DI-03813">
        <name>Neutropenia, severe congenital 5, autosomal recessive</name>
        <acronym>SCN5</acronym>
        <description>An autosomal recessive primary immunodeficiency disorder characterized primarily by neutropenia and neutrophil dysfunction, a lack of response to G-CSF, life-threatening infections, bone marrow fibrosis, and renal extramedullary hematopoiesis.</description>
        <dbReference type="MIM" id="615285"/>
    </disease>
    <text>The disease is caused by variants affecting the gene represented in this entry.</text>
</comment>
<comment type="similarity">
    <text evidence="6">Belongs to the STXBP/unc-18/SEC1 family.</text>
</comment>
<sequence length="570" mass="65077">MNVVFAVKQYISKMIEDSGPGMKVLLMDKETTGIVSMVYTQSEILQKEVYLFERIDSQNREIMKHLKAICFLRPTKENVDYIIQELRRPKYTIYFIYFSNVISKSDVKSLAEADEQEVVAEVQEFYGDYIAVNPHLFSLNILGCCQGRNWDPAQLSRTTQGLTALLLSLKKCPMIRYQLSSEAAKRLAECVKQVITKEYELFEFRRTEVPPLLLILDRCDDAITPLLNQWTYQAMVHELLGINNNRIDLSRVPGISKDLREVVLSAENDEFYANNMYLNFAEIGSNIKNLMEDFQKKKPKEQQKLESIADMKAFVENYPQFKKMSGTVSKHVTVVGELSRLVSERNLLEVSEVEQELACQNDHSSALQNIKRLLQNPKVTEFDAARLVMLYALHYERHSSNSLPGLMMDLRNKGVSEKYRKLVSAVVEYGGKRVRGSDLFSPKDAVAITKQFLKGLKGVENVYTQHQPFLHETLDHLIKGRLKENLYPYLGPSTLRDRPQDIIVFVIGGATYEEALTVYNLNRTTPGVRIVLGGTTVHNTKSFLEEVLASGLHSRSKESSQVTSRSASRR</sequence>
<gene>
    <name type="primary">VPS45</name>
    <name type="synonym">VPS45A</name>
    <name type="synonym">VPS45B</name>
</gene>
<accession>Q9NRW7</accession>
<accession>D3DUZ9</accession>
<accession>F5H8K1</accession>
<accession>Q15715</accession>
<accession>Q53FR8</accession>
<accession>Q5T4P6</accession>
<accession>Q9Y4Z6</accession>
<reference key="1">
    <citation type="journal article" date="1996" name="Gene">
        <title>Mammalian homologues of yeast vacuolar protein sorting (vps) genes implicated in Golgi-to-lysosome trafficking.</title>
        <authorList>
            <person name="Pevsner J."/>
            <person name="Hsu S.-C."/>
            <person name="Hyde P.S."/>
            <person name="Scheller R.H."/>
        </authorList>
    </citation>
    <scope>NUCLEOTIDE SEQUENCE [MRNA] (ISOFORM 1)</scope>
    <source>
        <tissue>Brain</tissue>
    </source>
</reference>
<reference key="2">
    <citation type="journal article" date="1999" name="Int. J. Biochem. Cell Biol.">
        <title>Molecular cloning and characterization of a cDNA encoding the human leucocyte vacuolar protein sorting (hlVps45).</title>
        <authorList>
            <person name="Rajasekariah P."/>
            <person name="Eyre H.J."/>
            <person name="Stanley K.K."/>
            <person name="Walls R.S."/>
            <person name="Sutherland G.R."/>
        </authorList>
    </citation>
    <scope>NUCLEOTIDE SEQUENCE [MRNA] (ISOFORM 1)</scope>
    <source>
        <tissue>Leukocyte</tissue>
    </source>
</reference>
<reference key="3">
    <citation type="submission" date="1999-07" db="EMBL/GenBank/DDBJ databases">
        <title>Novel genes expressed in hematopoietic stem/progenitor cells from myelodysplastic syndrome patients.</title>
        <authorList>
            <person name="Gu J."/>
            <person name="Huang Q."/>
            <person name="Yu Y."/>
            <person name="Xu S."/>
            <person name="Han Z."/>
            <person name="Fu G."/>
            <person name="Zhou J."/>
            <person name="Wang Y."/>
            <person name="Huang C."/>
            <person name="Ren S."/>
            <person name="Tu Y."/>
            <person name="Chen Z."/>
        </authorList>
    </citation>
    <scope>NUCLEOTIDE SEQUENCE [LARGE SCALE MRNA] (ISOFORM 1)</scope>
    <source>
        <tissue>Hematopoietic stem cell</tissue>
    </source>
</reference>
<reference key="4">
    <citation type="journal article" date="2004" name="Nat. Genet.">
        <title>Complete sequencing and characterization of 21,243 full-length human cDNAs.</title>
        <authorList>
            <person name="Ota T."/>
            <person name="Suzuki Y."/>
            <person name="Nishikawa T."/>
            <person name="Otsuki T."/>
            <person name="Sugiyama T."/>
            <person name="Irie R."/>
            <person name="Wakamatsu A."/>
            <person name="Hayashi K."/>
            <person name="Sato H."/>
            <person name="Nagai K."/>
            <person name="Kimura K."/>
            <person name="Makita H."/>
            <person name="Sekine M."/>
            <person name="Obayashi M."/>
            <person name="Nishi T."/>
            <person name="Shibahara T."/>
            <person name="Tanaka T."/>
            <person name="Ishii S."/>
            <person name="Yamamoto J."/>
            <person name="Saito K."/>
            <person name="Kawai Y."/>
            <person name="Isono Y."/>
            <person name="Nakamura Y."/>
            <person name="Nagahari K."/>
            <person name="Murakami K."/>
            <person name="Yasuda T."/>
            <person name="Iwayanagi T."/>
            <person name="Wagatsuma M."/>
            <person name="Shiratori A."/>
            <person name="Sudo H."/>
            <person name="Hosoiri T."/>
            <person name="Kaku Y."/>
            <person name="Kodaira H."/>
            <person name="Kondo H."/>
            <person name="Sugawara M."/>
            <person name="Takahashi M."/>
            <person name="Kanda K."/>
            <person name="Yokoi T."/>
            <person name="Furuya T."/>
            <person name="Kikkawa E."/>
            <person name="Omura Y."/>
            <person name="Abe K."/>
            <person name="Kamihara K."/>
            <person name="Katsuta N."/>
            <person name="Sato K."/>
            <person name="Tanikawa M."/>
            <person name="Yamazaki M."/>
            <person name="Ninomiya K."/>
            <person name="Ishibashi T."/>
            <person name="Yamashita H."/>
            <person name="Murakawa K."/>
            <person name="Fujimori K."/>
            <person name="Tanai H."/>
            <person name="Kimata M."/>
            <person name="Watanabe M."/>
            <person name="Hiraoka S."/>
            <person name="Chiba Y."/>
            <person name="Ishida S."/>
            <person name="Ono Y."/>
            <person name="Takiguchi S."/>
            <person name="Watanabe S."/>
            <person name="Yosida M."/>
            <person name="Hotuta T."/>
            <person name="Kusano J."/>
            <person name="Kanehori K."/>
            <person name="Takahashi-Fujii A."/>
            <person name="Hara H."/>
            <person name="Tanase T.-O."/>
            <person name="Nomura Y."/>
            <person name="Togiya S."/>
            <person name="Komai F."/>
            <person name="Hara R."/>
            <person name="Takeuchi K."/>
            <person name="Arita M."/>
            <person name="Imose N."/>
            <person name="Musashino K."/>
            <person name="Yuuki H."/>
            <person name="Oshima A."/>
            <person name="Sasaki N."/>
            <person name="Aotsuka S."/>
            <person name="Yoshikawa Y."/>
            <person name="Matsunawa H."/>
            <person name="Ichihara T."/>
            <person name="Shiohata N."/>
            <person name="Sano S."/>
            <person name="Moriya S."/>
            <person name="Momiyama H."/>
            <person name="Satoh N."/>
            <person name="Takami S."/>
            <person name="Terashima Y."/>
            <person name="Suzuki O."/>
            <person name="Nakagawa S."/>
            <person name="Senoh A."/>
            <person name="Mizoguchi H."/>
            <person name="Goto Y."/>
            <person name="Shimizu F."/>
            <person name="Wakebe H."/>
            <person name="Hishigaki H."/>
            <person name="Watanabe T."/>
            <person name="Sugiyama A."/>
            <person name="Takemoto M."/>
            <person name="Kawakami B."/>
            <person name="Yamazaki M."/>
            <person name="Watanabe K."/>
            <person name="Kumagai A."/>
            <person name="Itakura S."/>
            <person name="Fukuzumi Y."/>
            <person name="Fujimori Y."/>
            <person name="Komiyama M."/>
            <person name="Tashiro H."/>
            <person name="Tanigami A."/>
            <person name="Fujiwara T."/>
            <person name="Ono T."/>
            <person name="Yamada K."/>
            <person name="Fujii Y."/>
            <person name="Ozaki K."/>
            <person name="Hirao M."/>
            <person name="Ohmori Y."/>
            <person name="Kawabata A."/>
            <person name="Hikiji T."/>
            <person name="Kobatake N."/>
            <person name="Inagaki H."/>
            <person name="Ikema Y."/>
            <person name="Okamoto S."/>
            <person name="Okitani R."/>
            <person name="Kawakami T."/>
            <person name="Noguchi S."/>
            <person name="Itoh T."/>
            <person name="Shigeta K."/>
            <person name="Senba T."/>
            <person name="Matsumura K."/>
            <person name="Nakajima Y."/>
            <person name="Mizuno T."/>
            <person name="Morinaga M."/>
            <person name="Sasaki M."/>
            <person name="Togashi T."/>
            <person name="Oyama M."/>
            <person name="Hata H."/>
            <person name="Watanabe M."/>
            <person name="Komatsu T."/>
            <person name="Mizushima-Sugano J."/>
            <person name="Satoh T."/>
            <person name="Shirai Y."/>
            <person name="Takahashi Y."/>
            <person name="Nakagawa K."/>
            <person name="Okumura K."/>
            <person name="Nagase T."/>
            <person name="Nomura N."/>
            <person name="Kikuchi H."/>
            <person name="Masuho Y."/>
            <person name="Yamashita R."/>
            <person name="Nakai K."/>
            <person name="Yada T."/>
            <person name="Nakamura Y."/>
            <person name="Ohara O."/>
            <person name="Isogai T."/>
            <person name="Sugano S."/>
        </authorList>
    </citation>
    <scope>NUCLEOTIDE SEQUENCE [LARGE SCALE MRNA] (ISOFORM 1)</scope>
</reference>
<reference key="5">
    <citation type="submission" date="2005-04" db="EMBL/GenBank/DDBJ databases">
        <authorList>
            <person name="Suzuki Y."/>
            <person name="Sugano S."/>
            <person name="Totoki Y."/>
            <person name="Toyoda A."/>
            <person name="Takeda T."/>
            <person name="Sakaki Y."/>
            <person name="Tanaka A."/>
            <person name="Yokoyama S."/>
        </authorList>
    </citation>
    <scope>NUCLEOTIDE SEQUENCE [LARGE SCALE MRNA] (ISOFORM 1)</scope>
    <source>
        <tissue>Gastric mucosa</tissue>
    </source>
</reference>
<reference key="6">
    <citation type="journal article" date="2006" name="Nature">
        <title>The DNA sequence and biological annotation of human chromosome 1.</title>
        <authorList>
            <person name="Gregory S.G."/>
            <person name="Barlow K.F."/>
            <person name="McLay K.E."/>
            <person name="Kaul R."/>
            <person name="Swarbreck D."/>
            <person name="Dunham A."/>
            <person name="Scott C.E."/>
            <person name="Howe K.L."/>
            <person name="Woodfine K."/>
            <person name="Spencer C.C.A."/>
            <person name="Jones M.C."/>
            <person name="Gillson C."/>
            <person name="Searle S."/>
            <person name="Zhou Y."/>
            <person name="Kokocinski F."/>
            <person name="McDonald L."/>
            <person name="Evans R."/>
            <person name="Phillips K."/>
            <person name="Atkinson A."/>
            <person name="Cooper R."/>
            <person name="Jones C."/>
            <person name="Hall R.E."/>
            <person name="Andrews T.D."/>
            <person name="Lloyd C."/>
            <person name="Ainscough R."/>
            <person name="Almeida J.P."/>
            <person name="Ambrose K.D."/>
            <person name="Anderson F."/>
            <person name="Andrew R.W."/>
            <person name="Ashwell R.I.S."/>
            <person name="Aubin K."/>
            <person name="Babbage A.K."/>
            <person name="Bagguley C.L."/>
            <person name="Bailey J."/>
            <person name="Beasley H."/>
            <person name="Bethel G."/>
            <person name="Bird C.P."/>
            <person name="Bray-Allen S."/>
            <person name="Brown J.Y."/>
            <person name="Brown A.J."/>
            <person name="Buckley D."/>
            <person name="Burton J."/>
            <person name="Bye J."/>
            <person name="Carder C."/>
            <person name="Chapman J.C."/>
            <person name="Clark S.Y."/>
            <person name="Clarke G."/>
            <person name="Clee C."/>
            <person name="Cobley V."/>
            <person name="Collier R.E."/>
            <person name="Corby N."/>
            <person name="Coville G.J."/>
            <person name="Davies J."/>
            <person name="Deadman R."/>
            <person name="Dunn M."/>
            <person name="Earthrowl M."/>
            <person name="Ellington A.G."/>
            <person name="Errington H."/>
            <person name="Frankish A."/>
            <person name="Frankland J."/>
            <person name="French L."/>
            <person name="Garner P."/>
            <person name="Garnett J."/>
            <person name="Gay L."/>
            <person name="Ghori M.R.J."/>
            <person name="Gibson R."/>
            <person name="Gilby L.M."/>
            <person name="Gillett W."/>
            <person name="Glithero R.J."/>
            <person name="Grafham D.V."/>
            <person name="Griffiths C."/>
            <person name="Griffiths-Jones S."/>
            <person name="Grocock R."/>
            <person name="Hammond S."/>
            <person name="Harrison E.S.I."/>
            <person name="Hart E."/>
            <person name="Haugen E."/>
            <person name="Heath P.D."/>
            <person name="Holmes S."/>
            <person name="Holt K."/>
            <person name="Howden P.J."/>
            <person name="Hunt A.R."/>
            <person name="Hunt S.E."/>
            <person name="Hunter G."/>
            <person name="Isherwood J."/>
            <person name="James R."/>
            <person name="Johnson C."/>
            <person name="Johnson D."/>
            <person name="Joy A."/>
            <person name="Kay M."/>
            <person name="Kershaw J.K."/>
            <person name="Kibukawa M."/>
            <person name="Kimberley A.M."/>
            <person name="King A."/>
            <person name="Knights A.J."/>
            <person name="Lad H."/>
            <person name="Laird G."/>
            <person name="Lawlor S."/>
            <person name="Leongamornlert D.A."/>
            <person name="Lloyd D.M."/>
            <person name="Loveland J."/>
            <person name="Lovell J."/>
            <person name="Lush M.J."/>
            <person name="Lyne R."/>
            <person name="Martin S."/>
            <person name="Mashreghi-Mohammadi M."/>
            <person name="Matthews L."/>
            <person name="Matthews N.S.W."/>
            <person name="McLaren S."/>
            <person name="Milne S."/>
            <person name="Mistry S."/>
            <person name="Moore M.J.F."/>
            <person name="Nickerson T."/>
            <person name="O'Dell C.N."/>
            <person name="Oliver K."/>
            <person name="Palmeiri A."/>
            <person name="Palmer S.A."/>
            <person name="Parker A."/>
            <person name="Patel D."/>
            <person name="Pearce A.V."/>
            <person name="Peck A.I."/>
            <person name="Pelan S."/>
            <person name="Phelps K."/>
            <person name="Phillimore B.J."/>
            <person name="Plumb R."/>
            <person name="Rajan J."/>
            <person name="Raymond C."/>
            <person name="Rouse G."/>
            <person name="Saenphimmachak C."/>
            <person name="Sehra H.K."/>
            <person name="Sheridan E."/>
            <person name="Shownkeen R."/>
            <person name="Sims S."/>
            <person name="Skuce C.D."/>
            <person name="Smith M."/>
            <person name="Steward C."/>
            <person name="Subramanian S."/>
            <person name="Sycamore N."/>
            <person name="Tracey A."/>
            <person name="Tromans A."/>
            <person name="Van Helmond Z."/>
            <person name="Wall M."/>
            <person name="Wallis J.M."/>
            <person name="White S."/>
            <person name="Whitehead S.L."/>
            <person name="Wilkinson J.E."/>
            <person name="Willey D.L."/>
            <person name="Williams H."/>
            <person name="Wilming L."/>
            <person name="Wray P.W."/>
            <person name="Wu Z."/>
            <person name="Coulson A."/>
            <person name="Vaudin M."/>
            <person name="Sulston J.E."/>
            <person name="Durbin R.M."/>
            <person name="Hubbard T."/>
            <person name="Wooster R."/>
            <person name="Dunham I."/>
            <person name="Carter N.P."/>
            <person name="McVean G."/>
            <person name="Ross M.T."/>
            <person name="Harrow J."/>
            <person name="Olson M.V."/>
            <person name="Beck S."/>
            <person name="Rogers J."/>
            <person name="Bentley D.R."/>
        </authorList>
    </citation>
    <scope>NUCLEOTIDE SEQUENCE [LARGE SCALE GENOMIC DNA]</scope>
</reference>
<reference key="7">
    <citation type="submission" date="2005-09" db="EMBL/GenBank/DDBJ databases">
        <authorList>
            <person name="Mural R.J."/>
            <person name="Istrail S."/>
            <person name="Sutton G.G."/>
            <person name="Florea L."/>
            <person name="Halpern A.L."/>
            <person name="Mobarry C.M."/>
            <person name="Lippert R."/>
            <person name="Walenz B."/>
            <person name="Shatkay H."/>
            <person name="Dew I."/>
            <person name="Miller J.R."/>
            <person name="Flanigan M.J."/>
            <person name="Edwards N.J."/>
            <person name="Bolanos R."/>
            <person name="Fasulo D."/>
            <person name="Halldorsson B.V."/>
            <person name="Hannenhalli S."/>
            <person name="Turner R."/>
            <person name="Yooseph S."/>
            <person name="Lu F."/>
            <person name="Nusskern D.R."/>
            <person name="Shue B.C."/>
            <person name="Zheng X.H."/>
            <person name="Zhong F."/>
            <person name="Delcher A.L."/>
            <person name="Huson D.H."/>
            <person name="Kravitz S.A."/>
            <person name="Mouchard L."/>
            <person name="Reinert K."/>
            <person name="Remington K.A."/>
            <person name="Clark A.G."/>
            <person name="Waterman M.S."/>
            <person name="Eichler E.E."/>
            <person name="Adams M.D."/>
            <person name="Hunkapiller M.W."/>
            <person name="Myers E.W."/>
            <person name="Venter J.C."/>
        </authorList>
    </citation>
    <scope>NUCLEOTIDE SEQUENCE [LARGE SCALE GENOMIC DNA]</scope>
</reference>
<reference key="8">
    <citation type="journal article" date="2004" name="Genome Res.">
        <title>The status, quality, and expansion of the NIH full-length cDNA project: the Mammalian Gene Collection (MGC).</title>
        <authorList>
            <consortium name="The MGC Project Team"/>
        </authorList>
    </citation>
    <scope>NUCLEOTIDE SEQUENCE [LARGE SCALE MRNA] (ISOFORM 1)</scope>
    <source>
        <tissue>Colon</tissue>
        <tissue>Hippocampus</tissue>
    </source>
</reference>
<reference key="9">
    <citation type="journal article" date="2000" name="J. Cell Biol.">
        <title>Rabenosyn-5, a novel Rab5 effector, is complexed with hVPS45 and recruited to endosomes through a FYVE finger domain.</title>
        <authorList>
            <person name="Nielsen E."/>
            <person name="Christoforidis S."/>
            <person name="Uttenweiler-Joseph S."/>
            <person name="Miaczynska M."/>
            <person name="Dewitte F."/>
            <person name="Wilm M."/>
            <person name="Hoflack B."/>
            <person name="Zerial M."/>
        </authorList>
    </citation>
    <scope>INTERACTION WITH ZFYVE20</scope>
</reference>
<reference key="10">
    <citation type="journal article" date="2002" name="Nat. Cell Biol.">
        <title>Divalent Rab effectors regulate the sub-compartmental organization and sorting of early endosomes.</title>
        <authorList>
            <person name="de Renzis S."/>
            <person name="Soennichsen B."/>
            <person name="Zerial M."/>
        </authorList>
    </citation>
    <scope>INTERACTION WITH ZFYVE20</scope>
</reference>
<reference key="11">
    <citation type="journal article" date="2011" name="BMC Syst. Biol.">
        <title>Initial characterization of the human central proteome.</title>
        <authorList>
            <person name="Burkard T.R."/>
            <person name="Planyavsky M."/>
            <person name="Kaupe I."/>
            <person name="Breitwieser F.P."/>
            <person name="Buerckstuemmer T."/>
            <person name="Bennett K.L."/>
            <person name="Superti-Furga G."/>
            <person name="Colinge J."/>
        </authorList>
    </citation>
    <scope>IDENTIFICATION BY MASS SPECTROMETRY [LARGE SCALE ANALYSIS]</scope>
</reference>
<reference key="12">
    <citation type="journal article" date="2013" name="J. Proteome Res.">
        <title>Toward a comprehensive characterization of a human cancer cell phosphoproteome.</title>
        <authorList>
            <person name="Zhou H."/>
            <person name="Di Palma S."/>
            <person name="Preisinger C."/>
            <person name="Peng M."/>
            <person name="Polat A.N."/>
            <person name="Heck A.J."/>
            <person name="Mohammed S."/>
        </authorList>
    </citation>
    <scope>PHOSPHORYLATION [LARGE SCALE ANALYSIS] AT SER-307</scope>
    <scope>IDENTIFICATION BY MASS SPECTROMETRY [LARGE SCALE ANALYSIS]</scope>
    <source>
        <tissue>Erythroleukemia</tissue>
    </source>
</reference>
<reference key="13">
    <citation type="journal article" date="2014" name="J. Proteomics">
        <title>An enzyme assisted RP-RPLC approach for in-depth analysis of human liver phosphoproteome.</title>
        <authorList>
            <person name="Bian Y."/>
            <person name="Song C."/>
            <person name="Cheng K."/>
            <person name="Dong M."/>
            <person name="Wang F."/>
            <person name="Huang J."/>
            <person name="Sun D."/>
            <person name="Wang L."/>
            <person name="Ye M."/>
            <person name="Zou H."/>
        </authorList>
    </citation>
    <scope>PHOSPHORYLATION [LARGE SCALE ANALYSIS] AT SER-307</scope>
    <scope>IDENTIFICATION BY MASS SPECTROMETRY [LARGE SCALE ANALYSIS]</scope>
    <source>
        <tissue>Liver</tissue>
    </source>
</reference>
<reference key="14">
    <citation type="journal article" date="2013" name="N. Engl. J. Med.">
        <title>A congenital neutrophil defect syndrome associated with mutations in VPS45.</title>
        <authorList>
            <person name="Vilboux T."/>
            <person name="Lev A."/>
            <person name="Malicdan M.C."/>
            <person name="Simon A.J."/>
            <person name="Jarvinen P."/>
            <person name="Racek T."/>
            <person name="Puchalka J."/>
            <person name="Sood R."/>
            <person name="Carrington B."/>
            <person name="Bishop K."/>
            <person name="Mullikin J."/>
            <person name="Huizing M."/>
            <person name="Garty B.Z."/>
            <person name="Eyal E."/>
            <person name="Wolach B."/>
            <person name="Gavrieli R."/>
            <person name="Toren A."/>
            <person name="Soudack M."/>
            <person name="Atawneh O.M."/>
            <person name="Babushkin T."/>
            <person name="Schiby G."/>
            <person name="Cullinane A."/>
            <person name="Avivi C."/>
            <person name="Polak-Charcon S."/>
            <person name="Barshack I."/>
            <person name="Amariglio N."/>
            <person name="Rechavi G."/>
            <person name="van der Werff ten Bosch J."/>
            <person name="Anikster Y."/>
            <person name="Klein C."/>
            <person name="Gahl W.A."/>
            <person name="Somech R."/>
        </authorList>
    </citation>
    <scope>VARIANTS SCN5 ASN-224 AND LYS-238</scope>
</reference>
<name>VPS45_HUMAN</name>
<keyword id="KW-0025">Alternative splicing</keyword>
<keyword id="KW-0225">Disease variant</keyword>
<keyword id="KW-0967">Endosome</keyword>
<keyword id="KW-0333">Golgi apparatus</keyword>
<keyword id="KW-0472">Membrane</keyword>
<keyword id="KW-0597">Phosphoprotein</keyword>
<keyword id="KW-0653">Protein transport</keyword>
<keyword id="KW-1267">Proteomics identification</keyword>
<keyword id="KW-1185">Reference proteome</keyword>
<keyword id="KW-0813">Transport</keyword>
<organism>
    <name type="scientific">Homo sapiens</name>
    <name type="common">Human</name>
    <dbReference type="NCBI Taxonomy" id="9606"/>
    <lineage>
        <taxon>Eukaryota</taxon>
        <taxon>Metazoa</taxon>
        <taxon>Chordata</taxon>
        <taxon>Craniata</taxon>
        <taxon>Vertebrata</taxon>
        <taxon>Euteleostomi</taxon>
        <taxon>Mammalia</taxon>
        <taxon>Eutheria</taxon>
        <taxon>Euarchontoglires</taxon>
        <taxon>Primates</taxon>
        <taxon>Haplorrhini</taxon>
        <taxon>Catarrhini</taxon>
        <taxon>Hominidae</taxon>
        <taxon>Homo</taxon>
    </lineage>
</organism>